<proteinExistence type="inferred from homology"/>
<gene>
    <name evidence="1" type="primary">hslO</name>
    <name type="ordered locus">SaurJH9_0534</name>
</gene>
<reference key="1">
    <citation type="submission" date="2007-05" db="EMBL/GenBank/DDBJ databases">
        <title>Complete sequence of chromosome of Staphylococcus aureus subsp. aureus JH9.</title>
        <authorList>
            <consortium name="US DOE Joint Genome Institute"/>
            <person name="Copeland A."/>
            <person name="Lucas S."/>
            <person name="Lapidus A."/>
            <person name="Barry K."/>
            <person name="Detter J.C."/>
            <person name="Glavina del Rio T."/>
            <person name="Hammon N."/>
            <person name="Israni S."/>
            <person name="Pitluck S."/>
            <person name="Chain P."/>
            <person name="Malfatti S."/>
            <person name="Shin M."/>
            <person name="Vergez L."/>
            <person name="Schmutz J."/>
            <person name="Larimer F."/>
            <person name="Land M."/>
            <person name="Hauser L."/>
            <person name="Kyrpides N."/>
            <person name="Kim E."/>
            <person name="Tomasz A."/>
            <person name="Richardson P."/>
        </authorList>
    </citation>
    <scope>NUCLEOTIDE SEQUENCE [LARGE SCALE GENOMIC DNA]</scope>
    <source>
        <strain>JH9</strain>
    </source>
</reference>
<keyword id="KW-0143">Chaperone</keyword>
<keyword id="KW-0963">Cytoplasm</keyword>
<keyword id="KW-1015">Disulfide bond</keyword>
<keyword id="KW-0676">Redox-active center</keyword>
<keyword id="KW-0862">Zinc</keyword>
<comment type="function">
    <text evidence="1">Redox regulated molecular chaperone. Protects both thermally unfolding and oxidatively damaged proteins from irreversible aggregation. Plays an important role in the bacterial defense system toward oxidative stress.</text>
</comment>
<comment type="subcellular location">
    <subcellularLocation>
        <location evidence="1">Cytoplasm</location>
    </subcellularLocation>
</comment>
<comment type="PTM">
    <text evidence="1">Under oxidizing conditions two disulfide bonds are formed involving the reactive cysteines. Under reducing conditions zinc is bound to the reactive cysteines and the protein is inactive.</text>
</comment>
<comment type="similarity">
    <text evidence="1">Belongs to the HSP33 family.</text>
</comment>
<feature type="chain" id="PRO_1000076088" description="33 kDa chaperonin">
    <location>
        <begin position="1"/>
        <end position="293"/>
    </location>
</feature>
<feature type="disulfide bond" description="Redox-active" evidence="1">
    <location>
        <begin position="238"/>
        <end position="240"/>
    </location>
</feature>
<feature type="disulfide bond" description="Redox-active" evidence="1">
    <location>
        <begin position="271"/>
        <end position="274"/>
    </location>
</feature>
<evidence type="ECO:0000255" key="1">
    <source>
        <dbReference type="HAMAP-Rule" id="MF_00117"/>
    </source>
</evidence>
<name>HSLO_STAA9</name>
<protein>
    <recommendedName>
        <fullName evidence="1">33 kDa chaperonin</fullName>
    </recommendedName>
    <alternativeName>
        <fullName evidence="1">Heat shock protein 33 homolog</fullName>
        <shortName evidence="1">HSP33</shortName>
    </alternativeName>
</protein>
<sequence>MTHDYIVKALAFDGEIRAYAALTTETVQEAQTRHYTWPTASAAMGRTMTATAMMGAMLKGDQKLTVTVDGQGPIGRIIADANAKGEVRAYVDHPQTHFPLNEQGKLDVRRAVGTNGSIIVVKDVGMKDYFSGASPIVSGELGEDFTYYYATSEQTPSSVGLGVLVNPDNTIKAAGGFIIQVMPGAKDETISKLEKAISEMTPVSKLIEQGLTPEGLLNEILGEDHVQILEKMPVQFECNCSHEKFLNAIKGLGEAEIQNMIKEDHGAEAVCHFCGNKYKYTEEELNVLLESLA</sequence>
<dbReference type="EMBL" id="CP000703">
    <property type="protein sequence ID" value="ABQ48338.1"/>
    <property type="molecule type" value="Genomic_DNA"/>
</dbReference>
<dbReference type="RefSeq" id="WP_000148598.1">
    <property type="nucleotide sequence ID" value="NC_009487.1"/>
</dbReference>
<dbReference type="SMR" id="A5IQ65"/>
<dbReference type="KEGG" id="saj:SaurJH9_0534"/>
<dbReference type="HOGENOM" id="CLU_054493_1_0_9"/>
<dbReference type="GO" id="GO:0005737">
    <property type="term" value="C:cytoplasm"/>
    <property type="evidence" value="ECO:0007669"/>
    <property type="project" value="UniProtKB-SubCell"/>
</dbReference>
<dbReference type="GO" id="GO:0044183">
    <property type="term" value="F:protein folding chaperone"/>
    <property type="evidence" value="ECO:0007669"/>
    <property type="project" value="TreeGrafter"/>
</dbReference>
<dbReference type="GO" id="GO:0051082">
    <property type="term" value="F:unfolded protein binding"/>
    <property type="evidence" value="ECO:0007669"/>
    <property type="project" value="UniProtKB-UniRule"/>
</dbReference>
<dbReference type="GO" id="GO:0042026">
    <property type="term" value="P:protein refolding"/>
    <property type="evidence" value="ECO:0007669"/>
    <property type="project" value="TreeGrafter"/>
</dbReference>
<dbReference type="CDD" id="cd00498">
    <property type="entry name" value="Hsp33"/>
    <property type="match status" value="1"/>
</dbReference>
<dbReference type="Gene3D" id="3.55.30.10">
    <property type="entry name" value="Hsp33 domain"/>
    <property type="match status" value="1"/>
</dbReference>
<dbReference type="Gene3D" id="3.90.1280.10">
    <property type="entry name" value="HSP33 redox switch-like"/>
    <property type="match status" value="1"/>
</dbReference>
<dbReference type="HAMAP" id="MF_00117">
    <property type="entry name" value="HslO"/>
    <property type="match status" value="1"/>
</dbReference>
<dbReference type="InterPro" id="IPR000397">
    <property type="entry name" value="Heat_shock_Hsp33"/>
</dbReference>
<dbReference type="InterPro" id="IPR016154">
    <property type="entry name" value="Heat_shock_Hsp33_C"/>
</dbReference>
<dbReference type="InterPro" id="IPR016153">
    <property type="entry name" value="Heat_shock_Hsp33_N"/>
</dbReference>
<dbReference type="NCBIfam" id="NF001033">
    <property type="entry name" value="PRK00114.1"/>
    <property type="match status" value="1"/>
</dbReference>
<dbReference type="PANTHER" id="PTHR30111">
    <property type="entry name" value="33 KDA CHAPERONIN"/>
    <property type="match status" value="1"/>
</dbReference>
<dbReference type="PANTHER" id="PTHR30111:SF1">
    <property type="entry name" value="33 KDA CHAPERONIN"/>
    <property type="match status" value="1"/>
</dbReference>
<dbReference type="Pfam" id="PF01430">
    <property type="entry name" value="HSP33"/>
    <property type="match status" value="1"/>
</dbReference>
<dbReference type="PIRSF" id="PIRSF005261">
    <property type="entry name" value="Heat_shock_Hsp33"/>
    <property type="match status" value="1"/>
</dbReference>
<dbReference type="SUPFAM" id="SSF64397">
    <property type="entry name" value="Hsp33 domain"/>
    <property type="match status" value="1"/>
</dbReference>
<dbReference type="SUPFAM" id="SSF118352">
    <property type="entry name" value="HSP33 redox switch-like"/>
    <property type="match status" value="1"/>
</dbReference>
<accession>A5IQ65</accession>
<organism>
    <name type="scientific">Staphylococcus aureus (strain JH9)</name>
    <dbReference type="NCBI Taxonomy" id="359786"/>
    <lineage>
        <taxon>Bacteria</taxon>
        <taxon>Bacillati</taxon>
        <taxon>Bacillota</taxon>
        <taxon>Bacilli</taxon>
        <taxon>Bacillales</taxon>
        <taxon>Staphylococcaceae</taxon>
        <taxon>Staphylococcus</taxon>
    </lineage>
</organism>